<name>SYE_FINM2</name>
<comment type="function">
    <text evidence="1">Catalyzes the attachment of glutamate to tRNA(Glu) in a two-step reaction: glutamate is first activated by ATP to form Glu-AMP and then transferred to the acceptor end of tRNA(Glu).</text>
</comment>
<comment type="catalytic activity">
    <reaction evidence="1">
        <text>tRNA(Glu) + L-glutamate + ATP = L-glutamyl-tRNA(Glu) + AMP + diphosphate</text>
        <dbReference type="Rhea" id="RHEA:23540"/>
        <dbReference type="Rhea" id="RHEA-COMP:9663"/>
        <dbReference type="Rhea" id="RHEA-COMP:9680"/>
        <dbReference type="ChEBI" id="CHEBI:29985"/>
        <dbReference type="ChEBI" id="CHEBI:30616"/>
        <dbReference type="ChEBI" id="CHEBI:33019"/>
        <dbReference type="ChEBI" id="CHEBI:78442"/>
        <dbReference type="ChEBI" id="CHEBI:78520"/>
        <dbReference type="ChEBI" id="CHEBI:456215"/>
        <dbReference type="EC" id="6.1.1.17"/>
    </reaction>
</comment>
<comment type="subunit">
    <text evidence="1">Monomer.</text>
</comment>
<comment type="subcellular location">
    <subcellularLocation>
        <location evidence="1">Cytoplasm</location>
    </subcellularLocation>
</comment>
<comment type="similarity">
    <text evidence="1">Belongs to the class-I aminoacyl-tRNA synthetase family. Glutamate--tRNA ligase type 1 subfamily.</text>
</comment>
<feature type="chain" id="PRO_0000367674" description="Glutamate--tRNA ligase">
    <location>
        <begin position="1"/>
        <end position="489"/>
    </location>
</feature>
<feature type="short sequence motif" description="'HIGH' region" evidence="1">
    <location>
        <begin position="10"/>
        <end position="20"/>
    </location>
</feature>
<feature type="short sequence motif" description="'KMSKS' region" evidence="1">
    <location>
        <begin position="261"/>
        <end position="265"/>
    </location>
</feature>
<feature type="binding site" evidence="1">
    <location>
        <position position="264"/>
    </location>
    <ligand>
        <name>ATP</name>
        <dbReference type="ChEBI" id="CHEBI:30616"/>
    </ligand>
</feature>
<dbReference type="EC" id="6.1.1.17" evidence="1"/>
<dbReference type="EMBL" id="AP008971">
    <property type="protein sequence ID" value="BAG07832.1"/>
    <property type="molecule type" value="Genomic_DNA"/>
</dbReference>
<dbReference type="RefSeq" id="WP_012290389.1">
    <property type="nucleotide sequence ID" value="NC_010376.1"/>
</dbReference>
<dbReference type="SMR" id="B0S0W2"/>
<dbReference type="STRING" id="334413.FMG_0414"/>
<dbReference type="KEGG" id="fma:FMG_0414"/>
<dbReference type="eggNOG" id="COG0008">
    <property type="taxonomic scope" value="Bacteria"/>
</dbReference>
<dbReference type="HOGENOM" id="CLU_015768_6_1_9"/>
<dbReference type="Proteomes" id="UP000001319">
    <property type="component" value="Chromosome"/>
</dbReference>
<dbReference type="GO" id="GO:0005737">
    <property type="term" value="C:cytoplasm"/>
    <property type="evidence" value="ECO:0007669"/>
    <property type="project" value="UniProtKB-SubCell"/>
</dbReference>
<dbReference type="GO" id="GO:0005524">
    <property type="term" value="F:ATP binding"/>
    <property type="evidence" value="ECO:0007669"/>
    <property type="project" value="UniProtKB-UniRule"/>
</dbReference>
<dbReference type="GO" id="GO:0004818">
    <property type="term" value="F:glutamate-tRNA ligase activity"/>
    <property type="evidence" value="ECO:0007669"/>
    <property type="project" value="UniProtKB-UniRule"/>
</dbReference>
<dbReference type="GO" id="GO:0000049">
    <property type="term" value="F:tRNA binding"/>
    <property type="evidence" value="ECO:0007669"/>
    <property type="project" value="InterPro"/>
</dbReference>
<dbReference type="GO" id="GO:0008270">
    <property type="term" value="F:zinc ion binding"/>
    <property type="evidence" value="ECO:0007669"/>
    <property type="project" value="InterPro"/>
</dbReference>
<dbReference type="GO" id="GO:0006424">
    <property type="term" value="P:glutamyl-tRNA aminoacylation"/>
    <property type="evidence" value="ECO:0007669"/>
    <property type="project" value="UniProtKB-UniRule"/>
</dbReference>
<dbReference type="CDD" id="cd00808">
    <property type="entry name" value="GluRS_core"/>
    <property type="match status" value="1"/>
</dbReference>
<dbReference type="FunFam" id="3.40.50.620:FF:000045">
    <property type="entry name" value="Glutamate--tRNA ligase, mitochondrial"/>
    <property type="match status" value="1"/>
</dbReference>
<dbReference type="Gene3D" id="1.10.10.350">
    <property type="match status" value="1"/>
</dbReference>
<dbReference type="Gene3D" id="3.40.50.620">
    <property type="entry name" value="HUPs"/>
    <property type="match status" value="1"/>
</dbReference>
<dbReference type="HAMAP" id="MF_00022">
    <property type="entry name" value="Glu_tRNA_synth_type1"/>
    <property type="match status" value="1"/>
</dbReference>
<dbReference type="InterPro" id="IPR045462">
    <property type="entry name" value="aa-tRNA-synth_I_cd-bd"/>
</dbReference>
<dbReference type="InterPro" id="IPR020751">
    <property type="entry name" value="aa-tRNA-synth_I_codon-bd_sub2"/>
</dbReference>
<dbReference type="InterPro" id="IPR001412">
    <property type="entry name" value="aa-tRNA-synth_I_CS"/>
</dbReference>
<dbReference type="InterPro" id="IPR008925">
    <property type="entry name" value="aa_tRNA-synth_I_cd-bd_sf"/>
</dbReference>
<dbReference type="InterPro" id="IPR004527">
    <property type="entry name" value="Glu-tRNA-ligase_bac/mito"/>
</dbReference>
<dbReference type="InterPro" id="IPR000924">
    <property type="entry name" value="Glu/Gln-tRNA-synth"/>
</dbReference>
<dbReference type="InterPro" id="IPR020058">
    <property type="entry name" value="Glu/Gln-tRNA-synth_Ib_cat-dom"/>
</dbReference>
<dbReference type="InterPro" id="IPR049940">
    <property type="entry name" value="GluQ/Sye"/>
</dbReference>
<dbReference type="InterPro" id="IPR033910">
    <property type="entry name" value="GluRS_core"/>
</dbReference>
<dbReference type="InterPro" id="IPR014729">
    <property type="entry name" value="Rossmann-like_a/b/a_fold"/>
</dbReference>
<dbReference type="NCBIfam" id="TIGR00464">
    <property type="entry name" value="gltX_bact"/>
    <property type="match status" value="1"/>
</dbReference>
<dbReference type="PANTHER" id="PTHR43311">
    <property type="entry name" value="GLUTAMATE--TRNA LIGASE"/>
    <property type="match status" value="1"/>
</dbReference>
<dbReference type="PANTHER" id="PTHR43311:SF2">
    <property type="entry name" value="GLUTAMATE--TRNA LIGASE, MITOCHONDRIAL-RELATED"/>
    <property type="match status" value="1"/>
</dbReference>
<dbReference type="Pfam" id="PF19269">
    <property type="entry name" value="Anticodon_2"/>
    <property type="match status" value="1"/>
</dbReference>
<dbReference type="Pfam" id="PF00749">
    <property type="entry name" value="tRNA-synt_1c"/>
    <property type="match status" value="1"/>
</dbReference>
<dbReference type="PRINTS" id="PR00987">
    <property type="entry name" value="TRNASYNTHGLU"/>
</dbReference>
<dbReference type="SUPFAM" id="SSF48163">
    <property type="entry name" value="An anticodon-binding domain of class I aminoacyl-tRNA synthetases"/>
    <property type="match status" value="1"/>
</dbReference>
<dbReference type="SUPFAM" id="SSF52374">
    <property type="entry name" value="Nucleotidylyl transferase"/>
    <property type="match status" value="1"/>
</dbReference>
<dbReference type="PROSITE" id="PS00178">
    <property type="entry name" value="AA_TRNA_LIGASE_I"/>
    <property type="match status" value="1"/>
</dbReference>
<organism>
    <name type="scientific">Finegoldia magna (strain ATCC 29328 / DSM 20472 / WAL 2508)</name>
    <name type="common">Peptostreptococcus magnus</name>
    <dbReference type="NCBI Taxonomy" id="334413"/>
    <lineage>
        <taxon>Bacteria</taxon>
        <taxon>Bacillati</taxon>
        <taxon>Bacillota</taxon>
        <taxon>Tissierellia</taxon>
        <taxon>Tissierellales</taxon>
        <taxon>Peptoniphilaceae</taxon>
        <taxon>Finegoldia</taxon>
    </lineage>
</organism>
<keyword id="KW-0030">Aminoacyl-tRNA synthetase</keyword>
<keyword id="KW-0067">ATP-binding</keyword>
<keyword id="KW-0963">Cytoplasm</keyword>
<keyword id="KW-0436">Ligase</keyword>
<keyword id="KW-0547">Nucleotide-binding</keyword>
<keyword id="KW-0648">Protein biosynthesis</keyword>
<keyword id="KW-1185">Reference proteome</keyword>
<accession>B0S0W2</accession>
<gene>
    <name evidence="1" type="primary">gltX</name>
    <name type="ordered locus">FMG_0414</name>
</gene>
<evidence type="ECO:0000255" key="1">
    <source>
        <dbReference type="HAMAP-Rule" id="MF_00022"/>
    </source>
</evidence>
<proteinExistence type="inferred from homology"/>
<protein>
    <recommendedName>
        <fullName evidence="1">Glutamate--tRNA ligase</fullName>
        <ecNumber evidence="1">6.1.1.17</ecNumber>
    </recommendedName>
    <alternativeName>
        <fullName evidence="1">Glutamyl-tRNA synthetase</fullName>
        <shortName evidence="1">GluRS</shortName>
    </alternativeName>
</protein>
<sequence length="489" mass="56324">MSEVRVRFAPSPTGFLHIGGLRTALYNYLYAKRNNGKFLLRIEDTDRTRYVEGAIENLLEQLKWAGLDPDEGVVLDDEGNVTEVGECGPYIQSDRVKQGLYQKYIDELIEKGYAYYCFCSKERLDQVKAQQKADGLMPKYDGLCRGISIEDAKKRIANGEEYVIRLKLPENKEITFNDAIKGKITFNTNDMDDQVLIKSDGFPTYHFAVVVDDHLMGITHIVRGDEWISSTAKHVYLYQCFGWDVPEFVHLPVVLNKSGKKLSKRNDDVAVKDFRKKGYLPEAIDNYLALVGWSSEDNQEIMSMEELKHKFDFNRVSKSGGVFDTEKLNWINRHYIKEIENEKLASMLKPYLVEDGVISEDYPEYKLIEIASLFKEELDYMAEITEKVEFLFKDYEMDDDAKEFLNYEKLDELMNALKEEIESVDEIEKEFASGVMKKVQKKTGIKGKDLWMTTRAVVTGNVHGPDLDSIMVVLGKQEVLDRINKALNR</sequence>
<reference key="1">
    <citation type="journal article" date="2008" name="DNA Res.">
        <title>Complete genome sequence of Finegoldia magna, an anaerobic opportunistic pathogen.</title>
        <authorList>
            <person name="Goto T."/>
            <person name="Yamashita A."/>
            <person name="Hirakawa H."/>
            <person name="Matsutani M."/>
            <person name="Todo K."/>
            <person name="Ohshima K."/>
            <person name="Toh H."/>
            <person name="Miyamoto K."/>
            <person name="Kuhara S."/>
            <person name="Hattori M."/>
            <person name="Shimizu T."/>
            <person name="Akimoto S."/>
        </authorList>
    </citation>
    <scope>NUCLEOTIDE SEQUENCE [LARGE SCALE GENOMIC DNA]</scope>
    <source>
        <strain>ATCC 29328 / DSM 20472 / WAL 2508</strain>
    </source>
</reference>